<comment type="function">
    <text evidence="1">Performs an essential function in the repair of oxidatively damaged mtDNA that is required for the maintenance of the mitochondrial genome. Binds to DNA (By similarity).</text>
</comment>
<comment type="subcellular location">
    <subcellularLocation>
        <location evidence="1">Mitochondrion matrix</location>
        <location evidence="1">Mitochondrion nucleoid</location>
    </subcellularLocation>
</comment>
<comment type="similarity">
    <text evidence="3">Belongs to the MGM101 family.</text>
</comment>
<protein>
    <recommendedName>
        <fullName>Mitochondrial genome maintenance protein MGM101</fullName>
    </recommendedName>
</protein>
<feature type="transit peptide" description="Mitochondrion" evidence="2">
    <location>
        <begin position="1"/>
        <end position="32"/>
    </location>
</feature>
<feature type="chain" id="PRO_0000045814" description="Mitochondrial genome maintenance protein MGM101">
    <location>
        <begin position="33"/>
        <end position="254"/>
    </location>
</feature>
<organism>
    <name type="scientific">Eremothecium gossypii (strain ATCC 10895 / CBS 109.51 / FGSC 9923 / NRRL Y-1056)</name>
    <name type="common">Yeast</name>
    <name type="synonym">Ashbya gossypii</name>
    <dbReference type="NCBI Taxonomy" id="284811"/>
    <lineage>
        <taxon>Eukaryota</taxon>
        <taxon>Fungi</taxon>
        <taxon>Dikarya</taxon>
        <taxon>Ascomycota</taxon>
        <taxon>Saccharomycotina</taxon>
        <taxon>Saccharomycetes</taxon>
        <taxon>Saccharomycetales</taxon>
        <taxon>Saccharomycetaceae</taxon>
        <taxon>Eremothecium</taxon>
    </lineage>
</organism>
<dbReference type="EMBL" id="AE016815">
    <property type="protein sequence ID" value="AAS50685.1"/>
    <property type="molecule type" value="Genomic_DNA"/>
</dbReference>
<dbReference type="RefSeq" id="NP_982861.1">
    <property type="nucleotide sequence ID" value="NM_208214.1"/>
</dbReference>
<dbReference type="FunCoup" id="Q75DV9">
    <property type="interactions" value="305"/>
</dbReference>
<dbReference type="STRING" id="284811.Q75DV9"/>
<dbReference type="EnsemblFungi" id="AAS50685">
    <property type="protein sequence ID" value="AAS50685"/>
    <property type="gene ID" value="AGOS_ABL086C"/>
</dbReference>
<dbReference type="GeneID" id="4618942"/>
<dbReference type="KEGG" id="ago:AGOS_ABL086C"/>
<dbReference type="eggNOG" id="ENOG502RXU4">
    <property type="taxonomic scope" value="Eukaryota"/>
</dbReference>
<dbReference type="HOGENOM" id="CLU_028692_1_0_1"/>
<dbReference type="InParanoid" id="Q75DV9"/>
<dbReference type="OMA" id="INWETSW"/>
<dbReference type="OrthoDB" id="17164at2759"/>
<dbReference type="Proteomes" id="UP000000591">
    <property type="component" value="Chromosome II"/>
</dbReference>
<dbReference type="GO" id="GO:0000262">
    <property type="term" value="C:mitochondrial chromosome"/>
    <property type="evidence" value="ECO:0007669"/>
    <property type="project" value="InterPro"/>
</dbReference>
<dbReference type="GO" id="GO:0042645">
    <property type="term" value="C:mitochondrial nucleoid"/>
    <property type="evidence" value="ECO:0000318"/>
    <property type="project" value="GO_Central"/>
</dbReference>
<dbReference type="GO" id="GO:0003677">
    <property type="term" value="F:DNA binding"/>
    <property type="evidence" value="ECO:0000318"/>
    <property type="project" value="GO_Central"/>
</dbReference>
<dbReference type="GO" id="GO:0003697">
    <property type="term" value="F:single-stranded DNA binding"/>
    <property type="evidence" value="ECO:0007669"/>
    <property type="project" value="EnsemblFungi"/>
</dbReference>
<dbReference type="GO" id="GO:0036297">
    <property type="term" value="P:interstrand cross-link repair"/>
    <property type="evidence" value="ECO:0000318"/>
    <property type="project" value="GO_Central"/>
</dbReference>
<dbReference type="GO" id="GO:0000002">
    <property type="term" value="P:mitochondrial genome maintenance"/>
    <property type="evidence" value="ECO:0000318"/>
    <property type="project" value="GO_Central"/>
</dbReference>
<dbReference type="GO" id="GO:0000725">
    <property type="term" value="P:recombinational repair"/>
    <property type="evidence" value="ECO:0000318"/>
    <property type="project" value="GO_Central"/>
</dbReference>
<dbReference type="InterPro" id="IPR009446">
    <property type="entry name" value="Mgm101"/>
</dbReference>
<dbReference type="PANTHER" id="PTHR31404">
    <property type="entry name" value="MITOCHONDRIAL GENOME MAINTENANCE PROTEIN MGM101"/>
    <property type="match status" value="1"/>
</dbReference>
<dbReference type="PANTHER" id="PTHR31404:SF0">
    <property type="entry name" value="MITOCHONDRIAL GENOME MAINTENANCE PROTEIN MGM101"/>
    <property type="match status" value="1"/>
</dbReference>
<dbReference type="Pfam" id="PF06420">
    <property type="entry name" value="Mgm101p"/>
    <property type="match status" value="1"/>
</dbReference>
<sequence length="254" mass="28003">MIRFCSARLIQRGLHTAVAKPVMATSTAASRAAASKMAGAQAETGVVGSRLVPGYGRTLTRALGGQVLEADTEGGGHVMTEGSVDWRRSFHGLGAKPFAAPVQEELARALEPLDIEIKPDGLLYLPEIKYRRILNRAFGAGGWGLAPRSDTIVTAKLVTREYALVCHGQLVSVARGEQDYFIDTGIPTATEGCKSNALMRCCKDLGIGSELWDPVFIKKFKKEYCMERFVEHLTTKKKKKIWLRKDREVEYPYK</sequence>
<name>MG101_EREGS</name>
<accession>Q75DV9</accession>
<proteinExistence type="inferred from homology"/>
<gene>
    <name type="primary">MGM101</name>
    <name type="ordered locus">ABL086C</name>
</gene>
<reference key="1">
    <citation type="journal article" date="2004" name="Science">
        <title>The Ashbya gossypii genome as a tool for mapping the ancient Saccharomyces cerevisiae genome.</title>
        <authorList>
            <person name="Dietrich F.S."/>
            <person name="Voegeli S."/>
            <person name="Brachat S."/>
            <person name="Lerch A."/>
            <person name="Gates K."/>
            <person name="Steiner S."/>
            <person name="Mohr C."/>
            <person name="Poehlmann R."/>
            <person name="Luedi P."/>
            <person name="Choi S."/>
            <person name="Wing R.A."/>
            <person name="Flavier A."/>
            <person name="Gaffney T.D."/>
            <person name="Philippsen P."/>
        </authorList>
    </citation>
    <scope>NUCLEOTIDE SEQUENCE [LARGE SCALE GENOMIC DNA]</scope>
    <source>
        <strain>ATCC 10895 / CBS 109.51 / FGSC 9923 / NRRL Y-1056</strain>
    </source>
</reference>
<reference key="2">
    <citation type="journal article" date="2013" name="G3 (Bethesda)">
        <title>Genomes of Ashbya fungi isolated from insects reveal four mating-type loci, numerous translocations, lack of transposons, and distinct gene duplications.</title>
        <authorList>
            <person name="Dietrich F.S."/>
            <person name="Voegeli S."/>
            <person name="Kuo S."/>
            <person name="Philippsen P."/>
        </authorList>
    </citation>
    <scope>GENOME REANNOTATION</scope>
    <source>
        <strain>ATCC 10895 / CBS 109.51 / FGSC 9923 / NRRL Y-1056</strain>
    </source>
</reference>
<evidence type="ECO:0000250" key="1"/>
<evidence type="ECO:0000255" key="2"/>
<evidence type="ECO:0000305" key="3"/>
<keyword id="KW-0227">DNA damage</keyword>
<keyword id="KW-0234">DNA repair</keyword>
<keyword id="KW-0238">DNA-binding</keyword>
<keyword id="KW-0496">Mitochondrion</keyword>
<keyword id="KW-1135">Mitochondrion nucleoid</keyword>
<keyword id="KW-1185">Reference proteome</keyword>
<keyword id="KW-0809">Transit peptide</keyword>